<sequence length="85" mass="9381">MAPPLSPGSRVLIALIRVYQRLISPLLGPHCRFTPTCSSYGIEALRRFGVIKGSWLTVKRVLKCHPLHPGGDDPVPPGPFDTREH</sequence>
<reference key="1">
    <citation type="journal article" date="2009" name="J. Bacteriol.">
        <title>Genomic sequencing reveals regulatory mutations and recombinational events in the widely used MC4100 lineage of Escherichia coli K-12.</title>
        <authorList>
            <person name="Ferenci T."/>
            <person name="Zhou Z."/>
            <person name="Betteridge T."/>
            <person name="Ren Y."/>
            <person name="Liu Y."/>
            <person name="Feng L."/>
            <person name="Reeves P.R."/>
            <person name="Wang L."/>
        </authorList>
    </citation>
    <scope>NUCLEOTIDE SEQUENCE [LARGE SCALE GENOMIC DNA]</scope>
    <source>
        <strain>K12 / MC4100 / BW2952</strain>
    </source>
</reference>
<evidence type="ECO:0000255" key="1">
    <source>
        <dbReference type="HAMAP-Rule" id="MF_00386"/>
    </source>
</evidence>
<comment type="function">
    <text evidence="1">Could be involved in insertion of integral membrane proteins into the membrane.</text>
</comment>
<comment type="subcellular location">
    <subcellularLocation>
        <location evidence="1">Cell inner membrane</location>
        <topology evidence="1">Peripheral membrane protein</topology>
        <orientation evidence="1">Cytoplasmic side</orientation>
    </subcellularLocation>
</comment>
<comment type="similarity">
    <text evidence="1">Belongs to the UPF0161 family.</text>
</comment>
<name>YIDD_ECOBW</name>
<organism>
    <name type="scientific">Escherichia coli (strain K12 / MC4100 / BW2952)</name>
    <dbReference type="NCBI Taxonomy" id="595496"/>
    <lineage>
        <taxon>Bacteria</taxon>
        <taxon>Pseudomonadati</taxon>
        <taxon>Pseudomonadota</taxon>
        <taxon>Gammaproteobacteria</taxon>
        <taxon>Enterobacterales</taxon>
        <taxon>Enterobacteriaceae</taxon>
        <taxon>Escherichia</taxon>
    </lineage>
</organism>
<protein>
    <recommendedName>
        <fullName evidence="1">Putative membrane protein insertion efficiency factor</fullName>
    </recommendedName>
</protein>
<accession>C4ZYY2</accession>
<gene>
    <name evidence="1" type="primary">yidD</name>
    <name type="ordered locus">BWG_3395</name>
</gene>
<feature type="chain" id="PRO_1000205782" description="Putative membrane protein insertion efficiency factor">
    <location>
        <begin position="1"/>
        <end position="85"/>
    </location>
</feature>
<keyword id="KW-0997">Cell inner membrane</keyword>
<keyword id="KW-1003">Cell membrane</keyword>
<keyword id="KW-0472">Membrane</keyword>
<dbReference type="EMBL" id="CP001396">
    <property type="protein sequence ID" value="ACR65046.1"/>
    <property type="molecule type" value="Genomic_DNA"/>
</dbReference>
<dbReference type="RefSeq" id="WP_001307474.1">
    <property type="nucleotide sequence ID" value="NC_012759.1"/>
</dbReference>
<dbReference type="GeneID" id="97443257"/>
<dbReference type="KEGG" id="ebw:BWG_3395"/>
<dbReference type="HOGENOM" id="CLU_144811_5_2_6"/>
<dbReference type="GO" id="GO:0005886">
    <property type="term" value="C:plasma membrane"/>
    <property type="evidence" value="ECO:0007669"/>
    <property type="project" value="UniProtKB-SubCell"/>
</dbReference>
<dbReference type="HAMAP" id="MF_00386">
    <property type="entry name" value="UPF0161_YidD"/>
    <property type="match status" value="1"/>
</dbReference>
<dbReference type="InterPro" id="IPR002696">
    <property type="entry name" value="Membr_insert_effic_factor_YidD"/>
</dbReference>
<dbReference type="NCBIfam" id="TIGR00278">
    <property type="entry name" value="membrane protein insertion efficiency factor YidD"/>
    <property type="match status" value="1"/>
</dbReference>
<dbReference type="PANTHER" id="PTHR33383">
    <property type="entry name" value="MEMBRANE PROTEIN INSERTION EFFICIENCY FACTOR-RELATED"/>
    <property type="match status" value="1"/>
</dbReference>
<dbReference type="PANTHER" id="PTHR33383:SF1">
    <property type="entry name" value="MEMBRANE PROTEIN INSERTION EFFICIENCY FACTOR-RELATED"/>
    <property type="match status" value="1"/>
</dbReference>
<dbReference type="Pfam" id="PF01809">
    <property type="entry name" value="YidD"/>
    <property type="match status" value="1"/>
</dbReference>
<dbReference type="SMART" id="SM01234">
    <property type="entry name" value="Haemolytic"/>
    <property type="match status" value="1"/>
</dbReference>
<proteinExistence type="inferred from homology"/>